<accession>Q0T156</accession>
<gene>
    <name evidence="1" type="primary">fucU</name>
    <name type="ordered locus">SFV_2883</name>
</gene>
<comment type="function">
    <text evidence="1">Involved in the anomeric conversion of L-fucose.</text>
</comment>
<comment type="catalytic activity">
    <reaction evidence="1">
        <text>alpha-L-fucose = beta-L-fucose</text>
        <dbReference type="Rhea" id="RHEA:25580"/>
        <dbReference type="ChEBI" id="CHEBI:42548"/>
        <dbReference type="ChEBI" id="CHEBI:42589"/>
        <dbReference type="EC" id="5.1.3.29"/>
    </reaction>
</comment>
<comment type="pathway">
    <text evidence="1">Carbohydrate metabolism; L-fucose metabolism.</text>
</comment>
<comment type="subunit">
    <text evidence="1">Homodecamer.</text>
</comment>
<comment type="subcellular location">
    <subcellularLocation>
        <location evidence="1">Cytoplasm</location>
    </subcellularLocation>
</comment>
<comment type="similarity">
    <text evidence="1">Belongs to the RbsD / FucU family. FucU mutarotase subfamily.</text>
</comment>
<keyword id="KW-0119">Carbohydrate metabolism</keyword>
<keyword id="KW-0963">Cytoplasm</keyword>
<keyword id="KW-0294">Fucose metabolism</keyword>
<keyword id="KW-0413">Isomerase</keyword>
<organism>
    <name type="scientific">Shigella flexneri serotype 5b (strain 8401)</name>
    <dbReference type="NCBI Taxonomy" id="373384"/>
    <lineage>
        <taxon>Bacteria</taxon>
        <taxon>Pseudomonadati</taxon>
        <taxon>Pseudomonadota</taxon>
        <taxon>Gammaproteobacteria</taxon>
        <taxon>Enterobacterales</taxon>
        <taxon>Enterobacteriaceae</taxon>
        <taxon>Shigella</taxon>
    </lineage>
</organism>
<feature type="chain" id="PRO_1000187207" description="L-fucose mutarotase">
    <location>
        <begin position="1"/>
        <end position="140"/>
    </location>
</feature>
<feature type="active site" description="Proton donor" evidence="1">
    <location>
        <position position="22"/>
    </location>
</feature>
<feature type="binding site" evidence="1">
    <location>
        <position position="30"/>
    </location>
    <ligand>
        <name>substrate</name>
    </ligand>
</feature>
<feature type="binding site" evidence="1">
    <location>
        <position position="107"/>
    </location>
    <ligand>
        <name>substrate</name>
    </ligand>
</feature>
<feature type="binding site" evidence="1">
    <location>
        <begin position="129"/>
        <end position="131"/>
    </location>
    <ligand>
        <name>substrate</name>
    </ligand>
</feature>
<sequence length="140" mass="15473">MLKTISPLISPELLKVLAEMGHGDEIIFSDAHFPAHSMGPQVIRADGLLVSDLLQAIIPLFELDSYAPPLVMMAAVEGDTLDPEVERRYRNALSLQAPCPDIIRINRFAFYERAQKAFAIVITGERAKYGNILLKKGVTP</sequence>
<dbReference type="EC" id="5.1.3.29" evidence="1"/>
<dbReference type="EMBL" id="CP000266">
    <property type="protein sequence ID" value="ABF04959.1"/>
    <property type="molecule type" value="Genomic_DNA"/>
</dbReference>
<dbReference type="RefSeq" id="WP_000920840.1">
    <property type="nucleotide sequence ID" value="NC_008258.1"/>
</dbReference>
<dbReference type="SMR" id="Q0T156"/>
<dbReference type="GeneID" id="93779194"/>
<dbReference type="KEGG" id="sfv:SFV_2883"/>
<dbReference type="HOGENOM" id="CLU_120075_1_0_6"/>
<dbReference type="UniPathway" id="UPA00956"/>
<dbReference type="Proteomes" id="UP000000659">
    <property type="component" value="Chromosome"/>
</dbReference>
<dbReference type="GO" id="GO:0005737">
    <property type="term" value="C:cytoplasm"/>
    <property type="evidence" value="ECO:0007669"/>
    <property type="project" value="UniProtKB-SubCell"/>
</dbReference>
<dbReference type="GO" id="GO:0042806">
    <property type="term" value="F:fucose binding"/>
    <property type="evidence" value="ECO:0007669"/>
    <property type="project" value="InterPro"/>
</dbReference>
<dbReference type="GO" id="GO:0036373">
    <property type="term" value="F:L-fucose mutarotase activity"/>
    <property type="evidence" value="ECO:0007669"/>
    <property type="project" value="UniProtKB-EC"/>
</dbReference>
<dbReference type="GO" id="GO:0036065">
    <property type="term" value="P:fucosylation"/>
    <property type="evidence" value="ECO:0007669"/>
    <property type="project" value="TreeGrafter"/>
</dbReference>
<dbReference type="GO" id="GO:0042354">
    <property type="term" value="P:L-fucose metabolic process"/>
    <property type="evidence" value="ECO:0007669"/>
    <property type="project" value="UniProtKB-UniRule"/>
</dbReference>
<dbReference type="FunFam" id="3.40.1650.10:FF:000001">
    <property type="entry name" value="L-fucose mutarotase"/>
    <property type="match status" value="1"/>
</dbReference>
<dbReference type="Gene3D" id="3.40.1650.10">
    <property type="entry name" value="RbsD-like domain"/>
    <property type="match status" value="1"/>
</dbReference>
<dbReference type="HAMAP" id="MF_01662">
    <property type="entry name" value="L_fucose_rotase"/>
    <property type="match status" value="1"/>
</dbReference>
<dbReference type="InterPro" id="IPR023751">
    <property type="entry name" value="L-fucose_mutarotase"/>
</dbReference>
<dbReference type="InterPro" id="IPR023750">
    <property type="entry name" value="RbsD-like_sf"/>
</dbReference>
<dbReference type="InterPro" id="IPR050443">
    <property type="entry name" value="RbsD/FucU_mutarotase"/>
</dbReference>
<dbReference type="InterPro" id="IPR007721">
    <property type="entry name" value="RbsD_FucU"/>
</dbReference>
<dbReference type="NCBIfam" id="NF011949">
    <property type="entry name" value="PRK15420.1"/>
    <property type="match status" value="1"/>
</dbReference>
<dbReference type="PANTHER" id="PTHR31690">
    <property type="entry name" value="FUCOSE MUTAROTASE"/>
    <property type="match status" value="1"/>
</dbReference>
<dbReference type="PANTHER" id="PTHR31690:SF4">
    <property type="entry name" value="FUCOSE MUTAROTASE"/>
    <property type="match status" value="1"/>
</dbReference>
<dbReference type="Pfam" id="PF05025">
    <property type="entry name" value="RbsD_FucU"/>
    <property type="match status" value="1"/>
</dbReference>
<dbReference type="SUPFAM" id="SSF102546">
    <property type="entry name" value="RbsD-like"/>
    <property type="match status" value="1"/>
</dbReference>
<reference key="1">
    <citation type="journal article" date="2006" name="BMC Genomics">
        <title>Complete genome sequence of Shigella flexneri 5b and comparison with Shigella flexneri 2a.</title>
        <authorList>
            <person name="Nie H."/>
            <person name="Yang F."/>
            <person name="Zhang X."/>
            <person name="Yang J."/>
            <person name="Chen L."/>
            <person name="Wang J."/>
            <person name="Xiong Z."/>
            <person name="Peng J."/>
            <person name="Sun L."/>
            <person name="Dong J."/>
            <person name="Xue Y."/>
            <person name="Xu X."/>
            <person name="Chen S."/>
            <person name="Yao Z."/>
            <person name="Shen Y."/>
            <person name="Jin Q."/>
        </authorList>
    </citation>
    <scope>NUCLEOTIDE SEQUENCE [LARGE SCALE GENOMIC DNA]</scope>
    <source>
        <strain>8401</strain>
    </source>
</reference>
<protein>
    <recommendedName>
        <fullName evidence="1">L-fucose mutarotase</fullName>
        <ecNumber evidence="1">5.1.3.29</ecNumber>
    </recommendedName>
    <alternativeName>
        <fullName evidence="1">Fucose 1-epimerase</fullName>
    </alternativeName>
    <alternativeName>
        <fullName evidence="1">Type-2 mutarotase</fullName>
    </alternativeName>
</protein>
<evidence type="ECO:0000255" key="1">
    <source>
        <dbReference type="HAMAP-Rule" id="MF_01662"/>
    </source>
</evidence>
<name>FUCM_SHIF8</name>
<proteinExistence type="inferred from homology"/>